<name>HTPG_MYCA1</name>
<dbReference type="EMBL" id="CP000479">
    <property type="protein sequence ID" value="ABK65022.1"/>
    <property type="molecule type" value="Genomic_DNA"/>
</dbReference>
<dbReference type="RefSeq" id="WP_009976349.1">
    <property type="nucleotide sequence ID" value="NC_008595.1"/>
</dbReference>
<dbReference type="SMR" id="A0QEJ0"/>
<dbReference type="GeneID" id="75269711"/>
<dbReference type="KEGG" id="mav:MAV_2118"/>
<dbReference type="HOGENOM" id="CLU_006684_3_0_11"/>
<dbReference type="Proteomes" id="UP000001574">
    <property type="component" value="Chromosome"/>
</dbReference>
<dbReference type="GO" id="GO:0005737">
    <property type="term" value="C:cytoplasm"/>
    <property type="evidence" value="ECO:0007669"/>
    <property type="project" value="UniProtKB-SubCell"/>
</dbReference>
<dbReference type="GO" id="GO:0005524">
    <property type="term" value="F:ATP binding"/>
    <property type="evidence" value="ECO:0007669"/>
    <property type="project" value="UniProtKB-UniRule"/>
</dbReference>
<dbReference type="GO" id="GO:0016887">
    <property type="term" value="F:ATP hydrolysis activity"/>
    <property type="evidence" value="ECO:0007669"/>
    <property type="project" value="InterPro"/>
</dbReference>
<dbReference type="GO" id="GO:0140662">
    <property type="term" value="F:ATP-dependent protein folding chaperone"/>
    <property type="evidence" value="ECO:0007669"/>
    <property type="project" value="InterPro"/>
</dbReference>
<dbReference type="GO" id="GO:0051082">
    <property type="term" value="F:unfolded protein binding"/>
    <property type="evidence" value="ECO:0007669"/>
    <property type="project" value="UniProtKB-UniRule"/>
</dbReference>
<dbReference type="CDD" id="cd16927">
    <property type="entry name" value="HATPase_Hsp90-like"/>
    <property type="match status" value="1"/>
</dbReference>
<dbReference type="FunFam" id="1.20.120.790:FF:000006">
    <property type="entry name" value="Chaperone protein HtpG"/>
    <property type="match status" value="1"/>
</dbReference>
<dbReference type="FunFam" id="3.40.50.11260:FF:000005">
    <property type="entry name" value="Heat shock protein 90"/>
    <property type="match status" value="1"/>
</dbReference>
<dbReference type="FunFam" id="3.30.230.80:FF:000002">
    <property type="entry name" value="Molecular chaperone HtpG"/>
    <property type="match status" value="1"/>
</dbReference>
<dbReference type="FunFam" id="3.30.565.10:FF:000009">
    <property type="entry name" value="Molecular chaperone HtpG"/>
    <property type="match status" value="1"/>
</dbReference>
<dbReference type="Gene3D" id="3.30.230.80">
    <property type="match status" value="1"/>
</dbReference>
<dbReference type="Gene3D" id="3.40.50.11260">
    <property type="match status" value="1"/>
</dbReference>
<dbReference type="Gene3D" id="1.20.120.790">
    <property type="entry name" value="Heat shock protein 90, C-terminal domain"/>
    <property type="match status" value="1"/>
</dbReference>
<dbReference type="Gene3D" id="3.30.565.10">
    <property type="entry name" value="Histidine kinase-like ATPase, C-terminal domain"/>
    <property type="match status" value="1"/>
</dbReference>
<dbReference type="HAMAP" id="MF_00505">
    <property type="entry name" value="HSP90"/>
    <property type="match status" value="1"/>
</dbReference>
<dbReference type="InterPro" id="IPR036890">
    <property type="entry name" value="HATPase_C_sf"/>
</dbReference>
<dbReference type="InterPro" id="IPR037196">
    <property type="entry name" value="HSP90_C"/>
</dbReference>
<dbReference type="InterPro" id="IPR001404">
    <property type="entry name" value="Hsp90_fam"/>
</dbReference>
<dbReference type="InterPro" id="IPR020575">
    <property type="entry name" value="Hsp90_N"/>
</dbReference>
<dbReference type="InterPro" id="IPR020568">
    <property type="entry name" value="Ribosomal_Su5_D2-typ_SF"/>
</dbReference>
<dbReference type="NCBIfam" id="NF003555">
    <property type="entry name" value="PRK05218.1"/>
    <property type="match status" value="1"/>
</dbReference>
<dbReference type="PANTHER" id="PTHR11528">
    <property type="entry name" value="HEAT SHOCK PROTEIN 90 FAMILY MEMBER"/>
    <property type="match status" value="1"/>
</dbReference>
<dbReference type="Pfam" id="PF13589">
    <property type="entry name" value="HATPase_c_3"/>
    <property type="match status" value="1"/>
</dbReference>
<dbReference type="Pfam" id="PF00183">
    <property type="entry name" value="HSP90"/>
    <property type="match status" value="1"/>
</dbReference>
<dbReference type="PIRSF" id="PIRSF002583">
    <property type="entry name" value="Hsp90"/>
    <property type="match status" value="1"/>
</dbReference>
<dbReference type="PRINTS" id="PR00775">
    <property type="entry name" value="HEATSHOCK90"/>
</dbReference>
<dbReference type="SMART" id="SM00387">
    <property type="entry name" value="HATPase_c"/>
    <property type="match status" value="1"/>
</dbReference>
<dbReference type="SUPFAM" id="SSF55874">
    <property type="entry name" value="ATPase domain of HSP90 chaperone/DNA topoisomerase II/histidine kinase"/>
    <property type="match status" value="1"/>
</dbReference>
<dbReference type="SUPFAM" id="SSF110942">
    <property type="entry name" value="HSP90 C-terminal domain"/>
    <property type="match status" value="1"/>
</dbReference>
<dbReference type="SUPFAM" id="SSF54211">
    <property type="entry name" value="Ribosomal protein S5 domain 2-like"/>
    <property type="match status" value="1"/>
</dbReference>
<gene>
    <name evidence="1" type="primary">htpG</name>
    <name type="ordered locus">MAV_2118</name>
</gene>
<comment type="function">
    <text evidence="1">Molecular chaperone. Has ATPase activity.</text>
</comment>
<comment type="subunit">
    <text evidence="1">Homodimer.</text>
</comment>
<comment type="subcellular location">
    <subcellularLocation>
        <location evidence="1">Cytoplasm</location>
    </subcellularLocation>
</comment>
<comment type="similarity">
    <text evidence="1">Belongs to the heat shock protein 90 family.</text>
</comment>
<protein>
    <recommendedName>
        <fullName evidence="1">Chaperone protein HtpG</fullName>
    </recommendedName>
    <alternativeName>
        <fullName evidence="1">Heat shock protein HtpG</fullName>
    </alternativeName>
    <alternativeName>
        <fullName evidence="1">High temperature protein G</fullName>
    </alternativeName>
</protein>
<proteinExistence type="inferred from homology"/>
<accession>A0QEJ0</accession>
<organism>
    <name type="scientific">Mycobacterium avium (strain 104)</name>
    <dbReference type="NCBI Taxonomy" id="243243"/>
    <lineage>
        <taxon>Bacteria</taxon>
        <taxon>Bacillati</taxon>
        <taxon>Actinomycetota</taxon>
        <taxon>Actinomycetes</taxon>
        <taxon>Mycobacteriales</taxon>
        <taxon>Mycobacteriaceae</taxon>
        <taxon>Mycobacterium</taxon>
        <taxon>Mycobacterium avium complex (MAC)</taxon>
    </lineage>
</organism>
<feature type="chain" id="PRO_1000014930" description="Chaperone protein HtpG">
    <location>
        <begin position="1"/>
        <end position="644"/>
    </location>
</feature>
<feature type="region of interest" description="A; substrate-binding" evidence="1">
    <location>
        <begin position="1"/>
        <end position="352"/>
    </location>
</feature>
<feature type="region of interest" description="B" evidence="1">
    <location>
        <begin position="353"/>
        <end position="566"/>
    </location>
</feature>
<feature type="region of interest" description="C" evidence="1">
    <location>
        <begin position="567"/>
        <end position="644"/>
    </location>
</feature>
<sequence length="644" mass="72840">MNARVEQLEFQAEARQLLDLMVHSVYSNKDSFLRELISNASDALDKLRLEAFRNKDLDVDTSDLHIQIEVDKDARTLTIRDNGIGMTRAEVVDLIGTLAKSGTAELRQQLREAKNAQNEAASEELIGQFGIGFYSSFMVADKVELLTRKAGESEATKWESSGEGTYTIESVENAPQGTSVTLHLKPEDTEDELHDYTSEFKIKSLVKKYSDFIAWPIRMEVERRTPATEEGGEETVTREVETLNSMKALWARPKDEVSEEEYKEFYKHIAHAWDDPLEVIAMKAEGTFEYQALLFIPSHAPFDLFNRDAHTGIQLYVKRVFIMGDCDQLMPEYLRFVKGVVDAQDMSLNVSREILQQDRQIKAIRRRLTKKVLSTIKELQSERPDDYRTFWTQFGRVVKEGLLSDFDNQETLLQLCSFASTHSEEEATTLAQYVERMKEGQTQIFYATGETRQQILKSPHLEAFKAKGYEVLLLTDPVDEVWVGTVTEFDGKPLQSIAKGEVDLSAEGEESQAEREEQQKEFADLLAWLKDTLSDHVKEVRLSNRLTDSPACLITDAFGITPALARLYRASGQDIPVGKRILELNPKHPLVTGLRQAHQDRADDPSVAETAELLYGTALLAEGGALDDPARFAEILADRLARTL</sequence>
<evidence type="ECO:0000255" key="1">
    <source>
        <dbReference type="HAMAP-Rule" id="MF_00505"/>
    </source>
</evidence>
<reference key="1">
    <citation type="submission" date="2006-10" db="EMBL/GenBank/DDBJ databases">
        <authorList>
            <person name="Fleischmann R.D."/>
            <person name="Dodson R.J."/>
            <person name="Haft D.H."/>
            <person name="Merkel J.S."/>
            <person name="Nelson W.C."/>
            <person name="Fraser C.M."/>
        </authorList>
    </citation>
    <scope>NUCLEOTIDE SEQUENCE [LARGE SCALE GENOMIC DNA]</scope>
    <source>
        <strain>104</strain>
    </source>
</reference>
<keyword id="KW-0067">ATP-binding</keyword>
<keyword id="KW-0143">Chaperone</keyword>
<keyword id="KW-0963">Cytoplasm</keyword>
<keyword id="KW-0547">Nucleotide-binding</keyword>
<keyword id="KW-0346">Stress response</keyword>